<dbReference type="EC" id="2.4.2.7" evidence="1"/>
<dbReference type="EMBL" id="CP000142">
    <property type="protein sequence ID" value="ABA88677.2"/>
    <property type="molecule type" value="Genomic_DNA"/>
</dbReference>
<dbReference type="SMR" id="Q3A4N0"/>
<dbReference type="STRING" id="338963.Pcar_1431"/>
<dbReference type="KEGG" id="pca:Pcar_1431"/>
<dbReference type="eggNOG" id="COG0503">
    <property type="taxonomic scope" value="Bacteria"/>
</dbReference>
<dbReference type="HOGENOM" id="CLU_063339_3_0_7"/>
<dbReference type="OrthoDB" id="9803963at2"/>
<dbReference type="UniPathway" id="UPA00588">
    <property type="reaction ID" value="UER00646"/>
</dbReference>
<dbReference type="Proteomes" id="UP000002534">
    <property type="component" value="Chromosome"/>
</dbReference>
<dbReference type="GO" id="GO:0005737">
    <property type="term" value="C:cytoplasm"/>
    <property type="evidence" value="ECO:0007669"/>
    <property type="project" value="UniProtKB-SubCell"/>
</dbReference>
<dbReference type="GO" id="GO:0002055">
    <property type="term" value="F:adenine binding"/>
    <property type="evidence" value="ECO:0007669"/>
    <property type="project" value="TreeGrafter"/>
</dbReference>
<dbReference type="GO" id="GO:0003999">
    <property type="term" value="F:adenine phosphoribosyltransferase activity"/>
    <property type="evidence" value="ECO:0007669"/>
    <property type="project" value="UniProtKB-UniRule"/>
</dbReference>
<dbReference type="GO" id="GO:0016208">
    <property type="term" value="F:AMP binding"/>
    <property type="evidence" value="ECO:0007669"/>
    <property type="project" value="TreeGrafter"/>
</dbReference>
<dbReference type="GO" id="GO:0006168">
    <property type="term" value="P:adenine salvage"/>
    <property type="evidence" value="ECO:0007669"/>
    <property type="project" value="InterPro"/>
</dbReference>
<dbReference type="GO" id="GO:0044209">
    <property type="term" value="P:AMP salvage"/>
    <property type="evidence" value="ECO:0007669"/>
    <property type="project" value="UniProtKB-UniRule"/>
</dbReference>
<dbReference type="GO" id="GO:0006166">
    <property type="term" value="P:purine ribonucleoside salvage"/>
    <property type="evidence" value="ECO:0007669"/>
    <property type="project" value="UniProtKB-KW"/>
</dbReference>
<dbReference type="CDD" id="cd06223">
    <property type="entry name" value="PRTases_typeI"/>
    <property type="match status" value="1"/>
</dbReference>
<dbReference type="FunFam" id="3.40.50.2020:FF:000021">
    <property type="entry name" value="Adenine phosphoribosyltransferase"/>
    <property type="match status" value="1"/>
</dbReference>
<dbReference type="Gene3D" id="3.40.50.2020">
    <property type="match status" value="1"/>
</dbReference>
<dbReference type="HAMAP" id="MF_00004">
    <property type="entry name" value="Aden_phosphoribosyltr"/>
    <property type="match status" value="1"/>
</dbReference>
<dbReference type="InterPro" id="IPR005764">
    <property type="entry name" value="Ade_phspho_trans"/>
</dbReference>
<dbReference type="InterPro" id="IPR000836">
    <property type="entry name" value="PRibTrfase_dom"/>
</dbReference>
<dbReference type="InterPro" id="IPR029057">
    <property type="entry name" value="PRTase-like"/>
</dbReference>
<dbReference type="InterPro" id="IPR050054">
    <property type="entry name" value="UPRTase/APRTase"/>
</dbReference>
<dbReference type="NCBIfam" id="TIGR01090">
    <property type="entry name" value="apt"/>
    <property type="match status" value="1"/>
</dbReference>
<dbReference type="NCBIfam" id="NF002634">
    <property type="entry name" value="PRK02304.1-3"/>
    <property type="match status" value="1"/>
</dbReference>
<dbReference type="NCBIfam" id="NF002636">
    <property type="entry name" value="PRK02304.1-5"/>
    <property type="match status" value="1"/>
</dbReference>
<dbReference type="PANTHER" id="PTHR32315">
    <property type="entry name" value="ADENINE PHOSPHORIBOSYLTRANSFERASE"/>
    <property type="match status" value="1"/>
</dbReference>
<dbReference type="PANTHER" id="PTHR32315:SF3">
    <property type="entry name" value="ADENINE PHOSPHORIBOSYLTRANSFERASE"/>
    <property type="match status" value="1"/>
</dbReference>
<dbReference type="Pfam" id="PF00156">
    <property type="entry name" value="Pribosyltran"/>
    <property type="match status" value="1"/>
</dbReference>
<dbReference type="SUPFAM" id="SSF53271">
    <property type="entry name" value="PRTase-like"/>
    <property type="match status" value="1"/>
</dbReference>
<keyword id="KW-0963">Cytoplasm</keyword>
<keyword id="KW-0328">Glycosyltransferase</keyword>
<keyword id="KW-0660">Purine salvage</keyword>
<keyword id="KW-1185">Reference proteome</keyword>
<keyword id="KW-0808">Transferase</keyword>
<gene>
    <name evidence="1" type="primary">apt</name>
    <name type="ordered locus">Pcar_1431</name>
</gene>
<name>APT_SYNC1</name>
<accession>Q3A4N0</accession>
<sequence>MEDLRNVIRDIPDFPKKGIVFKDITTLLADAKSFHRMVDLIAHRYIGQKIDQIVGVEARGFILGAALAYKLGTGITLVRKPGKLPYKTIQKTYQLEYGTDTLEIHSDAFKPGDRVVVADDLLATGGTVAAVAELVKECGAEIVECAFLAELEFLKGRERLPLDRVFSLLKF</sequence>
<evidence type="ECO:0000255" key="1">
    <source>
        <dbReference type="HAMAP-Rule" id="MF_00004"/>
    </source>
</evidence>
<protein>
    <recommendedName>
        <fullName evidence="1">Adenine phosphoribosyltransferase</fullName>
        <shortName evidence="1">APRT</shortName>
        <ecNumber evidence="1">2.4.2.7</ecNumber>
    </recommendedName>
</protein>
<comment type="function">
    <text evidence="1">Catalyzes a salvage reaction resulting in the formation of AMP, that is energically less costly than de novo synthesis.</text>
</comment>
<comment type="catalytic activity">
    <reaction evidence="1">
        <text>AMP + diphosphate = 5-phospho-alpha-D-ribose 1-diphosphate + adenine</text>
        <dbReference type="Rhea" id="RHEA:16609"/>
        <dbReference type="ChEBI" id="CHEBI:16708"/>
        <dbReference type="ChEBI" id="CHEBI:33019"/>
        <dbReference type="ChEBI" id="CHEBI:58017"/>
        <dbReference type="ChEBI" id="CHEBI:456215"/>
        <dbReference type="EC" id="2.4.2.7"/>
    </reaction>
</comment>
<comment type="pathway">
    <text evidence="1">Purine metabolism; AMP biosynthesis via salvage pathway; AMP from adenine: step 1/1.</text>
</comment>
<comment type="subunit">
    <text evidence="1">Homodimer.</text>
</comment>
<comment type="subcellular location">
    <subcellularLocation>
        <location evidence="1">Cytoplasm</location>
    </subcellularLocation>
</comment>
<comment type="similarity">
    <text evidence="1">Belongs to the purine/pyrimidine phosphoribosyltransferase family.</text>
</comment>
<proteinExistence type="inferred from homology"/>
<feature type="chain" id="PRO_0000329364" description="Adenine phosphoribosyltransferase">
    <location>
        <begin position="1"/>
        <end position="171"/>
    </location>
</feature>
<organism>
    <name type="scientific">Syntrophotalea carbinolica (strain DSM 2380 / NBRC 103641 / GraBd1)</name>
    <name type="common">Pelobacter carbinolicus</name>
    <dbReference type="NCBI Taxonomy" id="338963"/>
    <lineage>
        <taxon>Bacteria</taxon>
        <taxon>Pseudomonadati</taxon>
        <taxon>Thermodesulfobacteriota</taxon>
        <taxon>Desulfuromonadia</taxon>
        <taxon>Desulfuromonadales</taxon>
        <taxon>Syntrophotaleaceae</taxon>
        <taxon>Syntrophotalea</taxon>
    </lineage>
</organism>
<reference key="1">
    <citation type="submission" date="2005-10" db="EMBL/GenBank/DDBJ databases">
        <title>Complete sequence of Pelobacter carbinolicus DSM 2380.</title>
        <authorList>
            <person name="Copeland A."/>
            <person name="Lucas S."/>
            <person name="Lapidus A."/>
            <person name="Barry K."/>
            <person name="Detter J.C."/>
            <person name="Glavina T."/>
            <person name="Hammon N."/>
            <person name="Israni S."/>
            <person name="Pitluck S."/>
            <person name="Chertkov O."/>
            <person name="Schmutz J."/>
            <person name="Larimer F."/>
            <person name="Land M."/>
            <person name="Kyrpides N."/>
            <person name="Ivanova N."/>
            <person name="Richardson P."/>
        </authorList>
    </citation>
    <scope>NUCLEOTIDE SEQUENCE [LARGE SCALE GENOMIC DNA]</scope>
    <source>
        <strain>DSM 2380 / NBRC 103641 / GraBd1</strain>
    </source>
</reference>